<proteinExistence type="evidence at protein level"/>
<sequence>MRKPIEHTADIAYEISGNSYEELLEEARNILLEEEGIVLDTEEKEKMYPLEETEDAFFDTVNDWILEISKGWAPWRIKREGNELKVTFRKIRKKEGTEIKALTYHLLKFERDGDVLKTKVVFDT</sequence>
<comment type="function">
    <text evidence="1">Activates the tRNA-splicing ligase complex by facilitating the enzymatic turnover of catalytic subunit RtcB. Acts by promoting the guanylylation of RtcB, a key intermediate step in tRNA ligation. Can also alter the NTP specificity of RtcB such that ATP, dGTP or ITP is used efficiently (By similarity). May also act as a chaperone or modulator of proteins involved in DNA or RNA processing.</text>
</comment>
<comment type="similarity">
    <text evidence="3">Belongs to the archease family.</text>
</comment>
<dbReference type="EMBL" id="AE000512">
    <property type="protein sequence ID" value="AAD36160.1"/>
    <property type="molecule type" value="Genomic_DNA"/>
</dbReference>
<dbReference type="PIR" id="C72297">
    <property type="entry name" value="C72297"/>
</dbReference>
<dbReference type="RefSeq" id="NP_228889.1">
    <property type="nucleotide sequence ID" value="NC_000853.1"/>
</dbReference>
<dbReference type="RefSeq" id="WP_004080400.1">
    <property type="nucleotide sequence ID" value="NZ_CP011107.1"/>
</dbReference>
<dbReference type="PDB" id="1J5U">
    <property type="method" value="X-ray"/>
    <property type="resolution" value="2.00 A"/>
    <property type="chains" value="A=1-124"/>
</dbReference>
<dbReference type="PDBsum" id="1J5U"/>
<dbReference type="SMR" id="Q9X0H1"/>
<dbReference type="STRING" id="243274.TM_1083"/>
<dbReference type="PaxDb" id="243274-THEMA_08940"/>
<dbReference type="EnsemblBacteria" id="AAD36160">
    <property type="protein sequence ID" value="AAD36160"/>
    <property type="gene ID" value="TM_1083"/>
</dbReference>
<dbReference type="KEGG" id="tma:TM1083"/>
<dbReference type="KEGG" id="tmi:THEMA_08940"/>
<dbReference type="KEGG" id="tmm:Tmari_1087"/>
<dbReference type="KEGG" id="tmw:THMA_1105"/>
<dbReference type="eggNOG" id="COG1371">
    <property type="taxonomic scope" value="Bacteria"/>
</dbReference>
<dbReference type="InParanoid" id="Q9X0H1"/>
<dbReference type="OrthoDB" id="46995at2"/>
<dbReference type="EvolutionaryTrace" id="Q9X0H1"/>
<dbReference type="Proteomes" id="UP000008183">
    <property type="component" value="Chromosome"/>
</dbReference>
<dbReference type="GO" id="GO:0046872">
    <property type="term" value="F:metal ion binding"/>
    <property type="evidence" value="ECO:0007669"/>
    <property type="project" value="UniProtKB-KW"/>
</dbReference>
<dbReference type="GO" id="GO:0008033">
    <property type="term" value="P:tRNA processing"/>
    <property type="evidence" value="ECO:0007669"/>
    <property type="project" value="UniProtKB-KW"/>
</dbReference>
<dbReference type="Gene3D" id="3.55.10.10">
    <property type="entry name" value="Archease domain"/>
    <property type="match status" value="1"/>
</dbReference>
<dbReference type="InterPro" id="IPR002804">
    <property type="entry name" value="Archease"/>
</dbReference>
<dbReference type="InterPro" id="IPR023572">
    <property type="entry name" value="Archease_dom"/>
</dbReference>
<dbReference type="InterPro" id="IPR036820">
    <property type="entry name" value="Archease_dom_sf"/>
</dbReference>
<dbReference type="PANTHER" id="PTHR12682">
    <property type="entry name" value="ARCHEASE"/>
    <property type="match status" value="1"/>
</dbReference>
<dbReference type="PANTHER" id="PTHR12682:SF11">
    <property type="entry name" value="PROTEIN ARCHEASE"/>
    <property type="match status" value="1"/>
</dbReference>
<dbReference type="Pfam" id="PF01951">
    <property type="entry name" value="Archease"/>
    <property type="match status" value="1"/>
</dbReference>
<dbReference type="SUPFAM" id="SSF69819">
    <property type="entry name" value="MTH1598-like"/>
    <property type="match status" value="1"/>
</dbReference>
<gene>
    <name type="ordered locus">TM_1083</name>
</gene>
<evidence type="ECO:0000250" key="1"/>
<evidence type="ECO:0000269" key="2">
    <source ref="3"/>
</evidence>
<evidence type="ECO:0000305" key="3"/>
<evidence type="ECO:0007829" key="4">
    <source>
        <dbReference type="PDB" id="1J5U"/>
    </source>
</evidence>
<keyword id="KW-0002">3D-structure</keyword>
<keyword id="KW-0106">Calcium</keyword>
<keyword id="KW-0479">Metal-binding</keyword>
<keyword id="KW-1185">Reference proteome</keyword>
<keyword id="KW-0819">tRNA processing</keyword>
<feature type="chain" id="PRO_0000407063" description="Protein archease">
    <location>
        <begin position="1"/>
        <end position="124"/>
    </location>
</feature>
<feature type="binding site" evidence="2">
    <location>
        <position position="7"/>
    </location>
    <ligand>
        <name>Ca(2+)</name>
        <dbReference type="ChEBI" id="CHEBI:29108"/>
    </ligand>
</feature>
<feature type="binding site" evidence="2">
    <location>
        <position position="10"/>
    </location>
    <ligand>
        <name>Ca(2+)</name>
        <dbReference type="ChEBI" id="CHEBI:29108"/>
    </ligand>
</feature>
<feature type="binding site" evidence="2">
    <location>
        <position position="123"/>
    </location>
    <ligand>
        <name>Ca(2+)</name>
        <dbReference type="ChEBI" id="CHEBI:29108"/>
    </ligand>
</feature>
<feature type="binding site" evidence="2">
    <location>
        <position position="124"/>
    </location>
    <ligand>
        <name>Ca(2+)</name>
        <dbReference type="ChEBI" id="CHEBI:29108"/>
    </ligand>
</feature>
<feature type="strand" evidence="4">
    <location>
        <begin position="11"/>
        <end position="19"/>
    </location>
</feature>
<feature type="helix" evidence="4">
    <location>
        <begin position="20"/>
        <end position="35"/>
    </location>
</feature>
<feature type="strand" evidence="4">
    <location>
        <begin position="38"/>
        <end position="49"/>
    </location>
</feature>
<feature type="helix" evidence="4">
    <location>
        <begin position="54"/>
        <end position="69"/>
    </location>
</feature>
<feature type="strand" evidence="4">
    <location>
        <begin position="72"/>
        <end position="80"/>
    </location>
</feature>
<feature type="strand" evidence="4">
    <location>
        <begin position="83"/>
        <end position="93"/>
    </location>
</feature>
<feature type="strand" evidence="4">
    <location>
        <begin position="110"/>
        <end position="112"/>
    </location>
</feature>
<feature type="strand" evidence="4">
    <location>
        <begin position="115"/>
        <end position="123"/>
    </location>
</feature>
<organism>
    <name type="scientific">Thermotoga maritima (strain ATCC 43589 / DSM 3109 / JCM 10099 / NBRC 100826 / MSB8)</name>
    <dbReference type="NCBI Taxonomy" id="243274"/>
    <lineage>
        <taxon>Bacteria</taxon>
        <taxon>Thermotogati</taxon>
        <taxon>Thermotogota</taxon>
        <taxon>Thermotogae</taxon>
        <taxon>Thermotogales</taxon>
        <taxon>Thermotogaceae</taxon>
        <taxon>Thermotoga</taxon>
    </lineage>
</organism>
<reference key="1">
    <citation type="journal article" date="1999" name="Nature">
        <title>Evidence for lateral gene transfer between Archaea and Bacteria from genome sequence of Thermotoga maritima.</title>
        <authorList>
            <person name="Nelson K.E."/>
            <person name="Clayton R.A."/>
            <person name="Gill S.R."/>
            <person name="Gwinn M.L."/>
            <person name="Dodson R.J."/>
            <person name="Haft D.H."/>
            <person name="Hickey E.K."/>
            <person name="Peterson J.D."/>
            <person name="Nelson W.C."/>
            <person name="Ketchum K.A."/>
            <person name="McDonald L.A."/>
            <person name="Utterback T.R."/>
            <person name="Malek J.A."/>
            <person name="Linher K.D."/>
            <person name="Garrett M.M."/>
            <person name="Stewart A.M."/>
            <person name="Cotton M.D."/>
            <person name="Pratt M.S."/>
            <person name="Phillips C.A."/>
            <person name="Richardson D.L."/>
            <person name="Heidelberg J.F."/>
            <person name="Sutton G.G."/>
            <person name="Fleischmann R.D."/>
            <person name="Eisen J.A."/>
            <person name="White O."/>
            <person name="Salzberg S.L."/>
            <person name="Smith H.O."/>
            <person name="Venter J.C."/>
            <person name="Fraser C.M."/>
        </authorList>
    </citation>
    <scope>NUCLEOTIDE SEQUENCE [LARGE SCALE GENOMIC DNA]</scope>
    <source>
        <strain>ATCC 43589 / DSM 3109 / JCM 10099 / NBRC 100826 / MSB8</strain>
    </source>
</reference>
<reference key="2">
    <citation type="journal article" date="2004" name="Proteins">
        <title>Predicted role for the archease protein family based on structural and sequence analysis of TM1083 and MTH1598, two proteins structurally characterized through structural genomics efforts.</title>
        <authorList>
            <person name="Canaves J.M."/>
        </authorList>
    </citation>
    <scope>PRELIMINARY FUNCTION</scope>
</reference>
<reference key="3">
    <citation type="submission" date="2002-07" db="PDB data bank">
        <title>Crystal structure of archease, possible chaperone (TM1083) from Thermotoga maritima at 2.0 A resolution.</title>
        <authorList>
            <consortium name="Joint Center for Structural Genomics (JCSG)"/>
        </authorList>
    </citation>
    <scope>X-RAY CRYSTALLOGRAPHY (2.00 ANGSTROMS) IN COMPLEX WITH CALCIUM</scope>
</reference>
<protein>
    <recommendedName>
        <fullName>Protein archease</fullName>
    </recommendedName>
</protein>
<accession>Q9X0H1</accession>
<name>ARCH_THEMA</name>